<reference evidence="5" key="1">
    <citation type="submission" date="2011-01" db="UniProtKB">
        <title>Involvement of TEM-1 type beta-lactamase and efflux pumps in the defense mechanisms of Enterococcus faecalis.</title>
        <authorList>
            <person name="Chouchani C."/>
            <person name="Marrakchi R."/>
            <person name="Aboulkacem N."/>
            <person name="Ferchichi L."/>
            <person name="El Salabi A."/>
        </authorList>
    </citation>
    <scope>PROTEIN SEQUENCE</scope>
</reference>
<evidence type="ECO:0000250" key="1">
    <source>
        <dbReference type="UniProtKB" id="P0A744"/>
    </source>
</evidence>
<evidence type="ECO:0000250" key="2">
    <source>
        <dbReference type="UniProtKB" id="P0A746"/>
    </source>
</evidence>
<evidence type="ECO:0000250" key="3">
    <source>
        <dbReference type="UniProtKB" id="Q9ZMK8"/>
    </source>
</evidence>
<evidence type="ECO:0000255" key="4">
    <source>
        <dbReference type="PROSITE-ProRule" id="PRU01126"/>
    </source>
</evidence>
<evidence type="ECO:0000305" key="5"/>
<organism>
    <name type="scientific">Enterococcus faecalis</name>
    <name type="common">Streptococcus faecalis</name>
    <dbReference type="NCBI Taxonomy" id="1351"/>
    <lineage>
        <taxon>Bacteria</taxon>
        <taxon>Bacillati</taxon>
        <taxon>Bacillota</taxon>
        <taxon>Bacilli</taxon>
        <taxon>Lactobacillales</taxon>
        <taxon>Enterococcaceae</taxon>
        <taxon>Enterococcus</taxon>
    </lineage>
</organism>
<proteinExistence type="evidence at protein level"/>
<dbReference type="EC" id="1.8.4.11"/>
<dbReference type="EC" id="1.8.4.12"/>
<dbReference type="SMR" id="P86890"/>
<dbReference type="GO" id="GO:0005737">
    <property type="term" value="C:cytoplasm"/>
    <property type="evidence" value="ECO:0007669"/>
    <property type="project" value="TreeGrafter"/>
</dbReference>
<dbReference type="GO" id="GO:0033744">
    <property type="term" value="F:L-methionine:thioredoxin-disulfide S-oxidoreductase activity"/>
    <property type="evidence" value="ECO:0007669"/>
    <property type="project" value="RHEA"/>
</dbReference>
<dbReference type="GO" id="GO:0033743">
    <property type="term" value="F:peptide-methionine (R)-S-oxide reductase activity"/>
    <property type="evidence" value="ECO:0007669"/>
    <property type="project" value="UniProtKB-EC"/>
</dbReference>
<dbReference type="GO" id="GO:0008113">
    <property type="term" value="F:peptide-methionine (S)-S-oxide reductase activity"/>
    <property type="evidence" value="ECO:0007669"/>
    <property type="project" value="UniProtKB-UniRule"/>
</dbReference>
<dbReference type="GO" id="GO:0036211">
    <property type="term" value="P:protein modification process"/>
    <property type="evidence" value="ECO:0007669"/>
    <property type="project" value="UniProtKB-UniRule"/>
</dbReference>
<dbReference type="GO" id="GO:0030091">
    <property type="term" value="P:protein repair"/>
    <property type="evidence" value="ECO:0007669"/>
    <property type="project" value="InterPro"/>
</dbReference>
<dbReference type="GO" id="GO:0006979">
    <property type="term" value="P:response to oxidative stress"/>
    <property type="evidence" value="ECO:0007669"/>
    <property type="project" value="InterPro"/>
</dbReference>
<dbReference type="FunFam" id="3.30.1060.10:FF:000007">
    <property type="entry name" value="Peptide methionine sulfoxide reductase msrA/msrB"/>
    <property type="match status" value="1"/>
</dbReference>
<dbReference type="FunFam" id="2.170.150.20:FF:000003">
    <property type="entry name" value="Peptide methionine sulfoxide reductase MsrB"/>
    <property type="match status" value="1"/>
</dbReference>
<dbReference type="Gene3D" id="2.170.150.20">
    <property type="entry name" value="Peptide methionine sulfoxide reductase"/>
    <property type="match status" value="1"/>
</dbReference>
<dbReference type="Gene3D" id="3.30.1060.10">
    <property type="entry name" value="Peptide methionine sulphoxide reductase MsrA"/>
    <property type="match status" value="1"/>
</dbReference>
<dbReference type="HAMAP" id="MF_01401">
    <property type="entry name" value="MsrA"/>
    <property type="match status" value="1"/>
</dbReference>
<dbReference type="InterPro" id="IPR002569">
    <property type="entry name" value="Met_Sox_Rdtase_MsrA_dom"/>
</dbReference>
<dbReference type="InterPro" id="IPR036509">
    <property type="entry name" value="Met_Sox_Rdtase_MsrA_sf"/>
</dbReference>
<dbReference type="InterPro" id="IPR028427">
    <property type="entry name" value="Met_Sox_Rdtase_MsrB"/>
</dbReference>
<dbReference type="InterPro" id="IPR002579">
    <property type="entry name" value="Met_Sox_Rdtase_MsrB_dom"/>
</dbReference>
<dbReference type="InterPro" id="IPR011057">
    <property type="entry name" value="Mss4-like_sf"/>
</dbReference>
<dbReference type="NCBIfam" id="TIGR00401">
    <property type="entry name" value="msrA"/>
    <property type="match status" value="1"/>
</dbReference>
<dbReference type="NCBIfam" id="TIGR00357">
    <property type="entry name" value="peptide-methionine (R)-S-oxide reductase MsrB"/>
    <property type="match status" value="1"/>
</dbReference>
<dbReference type="PANTHER" id="PTHR10173">
    <property type="entry name" value="METHIONINE SULFOXIDE REDUCTASE"/>
    <property type="match status" value="1"/>
</dbReference>
<dbReference type="PANTHER" id="PTHR10173:SF59">
    <property type="entry name" value="PEPTIDE METHIONINE SULFOXIDE REDUCTASE MSRA_MSRB"/>
    <property type="match status" value="1"/>
</dbReference>
<dbReference type="Pfam" id="PF01625">
    <property type="entry name" value="PMSR"/>
    <property type="match status" value="1"/>
</dbReference>
<dbReference type="Pfam" id="PF01641">
    <property type="entry name" value="SelR"/>
    <property type="match status" value="1"/>
</dbReference>
<dbReference type="SUPFAM" id="SSF51316">
    <property type="entry name" value="Mss4-like"/>
    <property type="match status" value="1"/>
</dbReference>
<dbReference type="SUPFAM" id="SSF55068">
    <property type="entry name" value="Peptide methionine sulfoxide reductase"/>
    <property type="match status" value="1"/>
</dbReference>
<dbReference type="PROSITE" id="PS51790">
    <property type="entry name" value="MSRB"/>
    <property type="match status" value="1"/>
</dbReference>
<name>MSRAB_ENTFL</name>
<comment type="function">
    <text evidence="1">Has an important function as a repair enzyme for proteins that have been inactivated by oxidation. Catalyzes the reversible oxidation-reduction of methionine sulfoxide in proteins to methionine (By similarity).</text>
</comment>
<comment type="catalytic activity">
    <reaction evidence="1">
        <text>L-methionyl-[protein] + [thioredoxin]-disulfide + H2O = L-methionyl-(S)-S-oxide-[protein] + [thioredoxin]-dithiol</text>
        <dbReference type="Rhea" id="RHEA:14217"/>
        <dbReference type="Rhea" id="RHEA-COMP:10698"/>
        <dbReference type="Rhea" id="RHEA-COMP:10700"/>
        <dbReference type="Rhea" id="RHEA-COMP:12313"/>
        <dbReference type="Rhea" id="RHEA-COMP:12315"/>
        <dbReference type="ChEBI" id="CHEBI:15377"/>
        <dbReference type="ChEBI" id="CHEBI:16044"/>
        <dbReference type="ChEBI" id="CHEBI:29950"/>
        <dbReference type="ChEBI" id="CHEBI:44120"/>
        <dbReference type="ChEBI" id="CHEBI:50058"/>
        <dbReference type="EC" id="1.8.4.11"/>
    </reaction>
</comment>
<comment type="catalytic activity">
    <reaction evidence="1">
        <text>[thioredoxin]-disulfide + L-methionine + H2O = L-methionine (S)-S-oxide + [thioredoxin]-dithiol</text>
        <dbReference type="Rhea" id="RHEA:19993"/>
        <dbReference type="Rhea" id="RHEA-COMP:10698"/>
        <dbReference type="Rhea" id="RHEA-COMP:10700"/>
        <dbReference type="ChEBI" id="CHEBI:15377"/>
        <dbReference type="ChEBI" id="CHEBI:29950"/>
        <dbReference type="ChEBI" id="CHEBI:50058"/>
        <dbReference type="ChEBI" id="CHEBI:57844"/>
        <dbReference type="ChEBI" id="CHEBI:58772"/>
        <dbReference type="EC" id="1.8.4.11"/>
    </reaction>
</comment>
<comment type="catalytic activity">
    <reaction evidence="2">
        <text>L-methionyl-[protein] + [thioredoxin]-disulfide + H2O = L-methionyl-(R)-S-oxide-[protein] + [thioredoxin]-dithiol</text>
        <dbReference type="Rhea" id="RHEA:24164"/>
        <dbReference type="Rhea" id="RHEA-COMP:10698"/>
        <dbReference type="Rhea" id="RHEA-COMP:10700"/>
        <dbReference type="Rhea" id="RHEA-COMP:12313"/>
        <dbReference type="Rhea" id="RHEA-COMP:12314"/>
        <dbReference type="ChEBI" id="CHEBI:15377"/>
        <dbReference type="ChEBI" id="CHEBI:16044"/>
        <dbReference type="ChEBI" id="CHEBI:29950"/>
        <dbReference type="ChEBI" id="CHEBI:45764"/>
        <dbReference type="ChEBI" id="CHEBI:50058"/>
        <dbReference type="EC" id="1.8.4.12"/>
    </reaction>
</comment>
<comment type="similarity">
    <text evidence="5">In the N-terminal section; belongs to the MsrA Met sulfoxide reductase family.</text>
</comment>
<comment type="similarity">
    <text evidence="5">In the C-terminal section; belongs to the MsrB Met sulfoxide reductase family.</text>
</comment>
<gene>
    <name evidence="3" type="primary">msrAB</name>
</gene>
<protein>
    <recommendedName>
        <fullName evidence="3">Peptide methionine sulfoxide reductase msrA/msrB</fullName>
    </recommendedName>
    <domain>
        <recommendedName>
            <fullName evidence="1">Peptide methionine sulfoxide reductase msrA</fullName>
            <shortName evidence="1">Protein-methionine-S-oxide reductase</shortName>
            <ecNumber>1.8.4.11</ecNumber>
        </recommendedName>
        <alternativeName>
            <fullName evidence="1">Peptide-methionine (S)-S-oxide reductase</fullName>
            <shortName evidence="1">Peptide Met(O) reductase</shortName>
        </alternativeName>
    </domain>
    <domain>
        <recommendedName>
            <fullName evidence="2">Peptide methionine sulfoxide reductase msrB</fullName>
            <ecNumber>1.8.4.12</ecNumber>
        </recommendedName>
        <alternativeName>
            <fullName evidence="2">Peptide-methionine (R)-S-oxide reductase</fullName>
        </alternativeName>
    </domain>
</protein>
<sequence>MGAIMQANENMGSKLPKTDGKVIYLAGGCFWGLEAYMERIYGVVDASSGYANGKTQSTNYQKLHESDHAESVKVVYDPKKISLDKLLRYYFKVVDPVSVNKQGNDVGRQYRTGIYYVDNADKKVIDNALKELQKSVKGKIAIEVEPLKNYVRAEIYHQDYLKKNPNGYCHIDLKKADEVIVDSDKYTKPSDEVLKKKLTQLQYEVTQNKRTEKPFENEYYNKEEEGIYVDITTGEPLFSMADKYDSGCGWPSFSKPISKDVVKYEDDESLNMRRTEVLSRIGKAHLGHVFNDGPKELGGLRYCINSASLRFIPLKDMEKEGYGEFIPYIKKGELKKYIHDKTH</sequence>
<feature type="chain" id="PRO_0000406599" description="Peptide methionine sulfoxide reductase msrA/msrB">
    <location>
        <begin position="1"/>
        <end position="343"/>
    </location>
</feature>
<feature type="domain" description="MsrB" evidence="4">
    <location>
        <begin position="191"/>
        <end position="314"/>
    </location>
</feature>
<feature type="region of interest" description="Peptide methionine sulfoxide reductase A" evidence="3">
    <location>
        <begin position="21"/>
        <end position="174"/>
    </location>
</feature>
<feature type="active site" description="Cysteine sulfenic acid (-SOH) intermediate" evidence="1">
    <location>
        <position position="29"/>
    </location>
</feature>
<feature type="active site" description="Nucleophile" evidence="4">
    <location>
        <position position="303"/>
    </location>
</feature>
<keyword id="KW-0903">Direct protein sequencing</keyword>
<keyword id="KW-0511">Multifunctional enzyme</keyword>
<keyword id="KW-0560">Oxidoreductase</keyword>
<accession>P86890</accession>